<sequence>MTSPRVNLLDFDADQMAAYVAGLNEKPFRAKQLMQWIHQRGVSDINDMSDLAKSFRATLLDKVEVLSLPVIKDEHATDGTRKWLLDVGAGNAVESVFIPEDDRGTLCISSQAGCAVNCRFCSTGRQGFSRNLTSGEIIGQLWFAEHLLRNDPEAIRRIEKYPTPGWEHTGRVISNVVMMGMGEPLLNYDNVVSALRLMLDDRAYGLSRRRVTVSTSGVVPMIDRLAQDCPVALAVSLHAPNDALRDQLVPLNQKYPLRELLDACERYLPFAPRDFLTFEYCMLDGVNDSDIQAKELVRLLRNIKCKINLIPFNPFPESGLKRSSAQRVNAFAGILLDAGMVATVRKTRGDDIAAACGQLAGDVVDRTRVRERDIHSAEIEIAEVESDVQPNEQPIEWLKKLT</sequence>
<organism>
    <name type="scientific">Polynucleobacter asymbioticus (strain DSM 18221 / CIP 109841 / QLW-P1DMWA-1)</name>
    <name type="common">Polynucleobacter necessarius subsp. asymbioticus</name>
    <dbReference type="NCBI Taxonomy" id="312153"/>
    <lineage>
        <taxon>Bacteria</taxon>
        <taxon>Pseudomonadati</taxon>
        <taxon>Pseudomonadota</taxon>
        <taxon>Betaproteobacteria</taxon>
        <taxon>Burkholderiales</taxon>
        <taxon>Burkholderiaceae</taxon>
        <taxon>Polynucleobacter</taxon>
    </lineage>
</organism>
<keyword id="KW-0004">4Fe-4S</keyword>
<keyword id="KW-0963">Cytoplasm</keyword>
<keyword id="KW-1015">Disulfide bond</keyword>
<keyword id="KW-0408">Iron</keyword>
<keyword id="KW-0411">Iron-sulfur</keyword>
<keyword id="KW-0479">Metal-binding</keyword>
<keyword id="KW-0489">Methyltransferase</keyword>
<keyword id="KW-1185">Reference proteome</keyword>
<keyword id="KW-0698">rRNA processing</keyword>
<keyword id="KW-0949">S-adenosyl-L-methionine</keyword>
<keyword id="KW-0808">Transferase</keyword>
<keyword id="KW-0819">tRNA processing</keyword>
<evidence type="ECO:0000255" key="1">
    <source>
        <dbReference type="HAMAP-Rule" id="MF_01849"/>
    </source>
</evidence>
<evidence type="ECO:0000255" key="2">
    <source>
        <dbReference type="PROSITE-ProRule" id="PRU01266"/>
    </source>
</evidence>
<feature type="chain" id="PRO_0000350310" description="Dual-specificity RNA methyltransferase RlmN">
    <location>
        <begin position="1"/>
        <end position="402"/>
    </location>
</feature>
<feature type="domain" description="Radical SAM core" evidence="2">
    <location>
        <begin position="100"/>
        <end position="351"/>
    </location>
</feature>
<feature type="active site" description="Proton acceptor" evidence="1">
    <location>
        <position position="94"/>
    </location>
</feature>
<feature type="active site" description="S-methylcysteine intermediate" evidence="1">
    <location>
        <position position="356"/>
    </location>
</feature>
<feature type="binding site" evidence="1">
    <location>
        <position position="114"/>
    </location>
    <ligand>
        <name>[4Fe-4S] cluster</name>
        <dbReference type="ChEBI" id="CHEBI:49883"/>
        <note>4Fe-4S-S-AdoMet</note>
    </ligand>
</feature>
<feature type="binding site" evidence="1">
    <location>
        <position position="118"/>
    </location>
    <ligand>
        <name>[4Fe-4S] cluster</name>
        <dbReference type="ChEBI" id="CHEBI:49883"/>
        <note>4Fe-4S-S-AdoMet</note>
    </ligand>
</feature>
<feature type="binding site" evidence="1">
    <location>
        <position position="121"/>
    </location>
    <ligand>
        <name>[4Fe-4S] cluster</name>
        <dbReference type="ChEBI" id="CHEBI:49883"/>
        <note>4Fe-4S-S-AdoMet</note>
    </ligand>
</feature>
<feature type="binding site" evidence="1">
    <location>
        <begin position="182"/>
        <end position="183"/>
    </location>
    <ligand>
        <name>S-adenosyl-L-methionine</name>
        <dbReference type="ChEBI" id="CHEBI:59789"/>
    </ligand>
</feature>
<feature type="binding site" evidence="1">
    <location>
        <position position="214"/>
    </location>
    <ligand>
        <name>S-adenosyl-L-methionine</name>
        <dbReference type="ChEBI" id="CHEBI:59789"/>
    </ligand>
</feature>
<feature type="binding site" evidence="1">
    <location>
        <begin position="236"/>
        <end position="238"/>
    </location>
    <ligand>
        <name>S-adenosyl-L-methionine</name>
        <dbReference type="ChEBI" id="CHEBI:59789"/>
    </ligand>
</feature>
<feature type="binding site" evidence="1">
    <location>
        <position position="313"/>
    </location>
    <ligand>
        <name>S-adenosyl-L-methionine</name>
        <dbReference type="ChEBI" id="CHEBI:59789"/>
    </ligand>
</feature>
<feature type="disulfide bond" description="(transient)" evidence="1">
    <location>
        <begin position="107"/>
        <end position="356"/>
    </location>
</feature>
<dbReference type="EC" id="2.1.1.192" evidence="1"/>
<dbReference type="EMBL" id="CP000655">
    <property type="protein sequence ID" value="ABP34506.1"/>
    <property type="molecule type" value="Genomic_DNA"/>
</dbReference>
<dbReference type="RefSeq" id="WP_011903131.1">
    <property type="nucleotide sequence ID" value="NC_009379.1"/>
</dbReference>
<dbReference type="SMR" id="A4SYE2"/>
<dbReference type="GeneID" id="31481680"/>
<dbReference type="KEGG" id="pnu:Pnuc_1292"/>
<dbReference type="eggNOG" id="COG0820">
    <property type="taxonomic scope" value="Bacteria"/>
</dbReference>
<dbReference type="HOGENOM" id="CLU_029101_0_0_4"/>
<dbReference type="Proteomes" id="UP000000231">
    <property type="component" value="Chromosome"/>
</dbReference>
<dbReference type="GO" id="GO:0005737">
    <property type="term" value="C:cytoplasm"/>
    <property type="evidence" value="ECO:0007669"/>
    <property type="project" value="UniProtKB-SubCell"/>
</dbReference>
<dbReference type="GO" id="GO:0051539">
    <property type="term" value="F:4 iron, 4 sulfur cluster binding"/>
    <property type="evidence" value="ECO:0007669"/>
    <property type="project" value="UniProtKB-UniRule"/>
</dbReference>
<dbReference type="GO" id="GO:0046872">
    <property type="term" value="F:metal ion binding"/>
    <property type="evidence" value="ECO:0007669"/>
    <property type="project" value="UniProtKB-KW"/>
</dbReference>
<dbReference type="GO" id="GO:0070040">
    <property type="term" value="F:rRNA (adenine(2503)-C2-)-methyltransferase activity"/>
    <property type="evidence" value="ECO:0007669"/>
    <property type="project" value="UniProtKB-UniRule"/>
</dbReference>
<dbReference type="GO" id="GO:0019843">
    <property type="term" value="F:rRNA binding"/>
    <property type="evidence" value="ECO:0007669"/>
    <property type="project" value="UniProtKB-UniRule"/>
</dbReference>
<dbReference type="GO" id="GO:0002935">
    <property type="term" value="F:tRNA (adenine(37)-C2)-methyltransferase activity"/>
    <property type="evidence" value="ECO:0007669"/>
    <property type="project" value="UniProtKB-UniRule"/>
</dbReference>
<dbReference type="GO" id="GO:0000049">
    <property type="term" value="F:tRNA binding"/>
    <property type="evidence" value="ECO:0007669"/>
    <property type="project" value="UniProtKB-UniRule"/>
</dbReference>
<dbReference type="GO" id="GO:0070475">
    <property type="term" value="P:rRNA base methylation"/>
    <property type="evidence" value="ECO:0007669"/>
    <property type="project" value="UniProtKB-UniRule"/>
</dbReference>
<dbReference type="GO" id="GO:0030488">
    <property type="term" value="P:tRNA methylation"/>
    <property type="evidence" value="ECO:0007669"/>
    <property type="project" value="UniProtKB-UniRule"/>
</dbReference>
<dbReference type="CDD" id="cd01335">
    <property type="entry name" value="Radical_SAM"/>
    <property type="match status" value="1"/>
</dbReference>
<dbReference type="FunFam" id="1.10.150.530:FF:000003">
    <property type="entry name" value="Dual-specificity RNA methyltransferase RlmN"/>
    <property type="match status" value="1"/>
</dbReference>
<dbReference type="FunFam" id="3.20.20.70:FF:000008">
    <property type="entry name" value="Dual-specificity RNA methyltransferase RlmN"/>
    <property type="match status" value="1"/>
</dbReference>
<dbReference type="Gene3D" id="1.10.150.530">
    <property type="match status" value="1"/>
</dbReference>
<dbReference type="Gene3D" id="3.20.20.70">
    <property type="entry name" value="Aldolase class I"/>
    <property type="match status" value="1"/>
</dbReference>
<dbReference type="HAMAP" id="MF_01849">
    <property type="entry name" value="RNA_methyltr_RlmN"/>
    <property type="match status" value="1"/>
</dbReference>
<dbReference type="InterPro" id="IPR013785">
    <property type="entry name" value="Aldolase_TIM"/>
</dbReference>
<dbReference type="InterPro" id="IPR040072">
    <property type="entry name" value="Methyltransferase_A"/>
</dbReference>
<dbReference type="InterPro" id="IPR048641">
    <property type="entry name" value="RlmN_N"/>
</dbReference>
<dbReference type="InterPro" id="IPR027492">
    <property type="entry name" value="RNA_MTrfase_RlmN"/>
</dbReference>
<dbReference type="InterPro" id="IPR004383">
    <property type="entry name" value="rRNA_lsu_MTrfase_RlmN/Cfr"/>
</dbReference>
<dbReference type="InterPro" id="IPR007197">
    <property type="entry name" value="rSAM"/>
</dbReference>
<dbReference type="NCBIfam" id="TIGR00048">
    <property type="entry name" value="rRNA_mod_RlmN"/>
    <property type="match status" value="1"/>
</dbReference>
<dbReference type="PANTHER" id="PTHR30544">
    <property type="entry name" value="23S RRNA METHYLTRANSFERASE"/>
    <property type="match status" value="1"/>
</dbReference>
<dbReference type="PANTHER" id="PTHR30544:SF5">
    <property type="entry name" value="RADICAL SAM CORE DOMAIN-CONTAINING PROTEIN"/>
    <property type="match status" value="1"/>
</dbReference>
<dbReference type="Pfam" id="PF04055">
    <property type="entry name" value="Radical_SAM"/>
    <property type="match status" value="1"/>
</dbReference>
<dbReference type="Pfam" id="PF21016">
    <property type="entry name" value="RlmN_N"/>
    <property type="match status" value="1"/>
</dbReference>
<dbReference type="PIRSF" id="PIRSF006004">
    <property type="entry name" value="CHP00048"/>
    <property type="match status" value="1"/>
</dbReference>
<dbReference type="SFLD" id="SFLDF00275">
    <property type="entry name" value="adenosine_C2_methyltransferase"/>
    <property type="match status" value="1"/>
</dbReference>
<dbReference type="SFLD" id="SFLDS00029">
    <property type="entry name" value="Radical_SAM"/>
    <property type="match status" value="1"/>
</dbReference>
<dbReference type="SUPFAM" id="SSF102114">
    <property type="entry name" value="Radical SAM enzymes"/>
    <property type="match status" value="1"/>
</dbReference>
<dbReference type="PROSITE" id="PS51918">
    <property type="entry name" value="RADICAL_SAM"/>
    <property type="match status" value="1"/>
</dbReference>
<proteinExistence type="inferred from homology"/>
<protein>
    <recommendedName>
        <fullName evidence="1">Dual-specificity RNA methyltransferase RlmN</fullName>
        <ecNumber evidence="1">2.1.1.192</ecNumber>
    </recommendedName>
    <alternativeName>
        <fullName evidence="1">23S rRNA (adenine(2503)-C(2))-methyltransferase</fullName>
    </alternativeName>
    <alternativeName>
        <fullName evidence="1">23S rRNA m2A2503 methyltransferase</fullName>
    </alternativeName>
    <alternativeName>
        <fullName evidence="1">Ribosomal RNA large subunit methyltransferase N</fullName>
    </alternativeName>
    <alternativeName>
        <fullName evidence="1">tRNA (adenine(37)-C(2))-methyltransferase</fullName>
    </alternativeName>
    <alternativeName>
        <fullName evidence="1">tRNA m2A37 methyltransferase</fullName>
    </alternativeName>
</protein>
<gene>
    <name evidence="1" type="primary">rlmN</name>
    <name type="ordered locus">Pnuc_1292</name>
</gene>
<name>RLMN_POLAQ</name>
<reference key="1">
    <citation type="journal article" date="2012" name="Stand. Genomic Sci.">
        <title>Complete genome sequence of Polynucleobacter necessarius subsp. asymbioticus type strain (QLW-P1DMWA-1(T)).</title>
        <authorList>
            <person name="Meincke L."/>
            <person name="Copeland A."/>
            <person name="Lapidus A."/>
            <person name="Lucas S."/>
            <person name="Berry K.W."/>
            <person name="Del Rio T.G."/>
            <person name="Hammon N."/>
            <person name="Dalin E."/>
            <person name="Tice H."/>
            <person name="Pitluck S."/>
            <person name="Richardson P."/>
            <person name="Bruce D."/>
            <person name="Goodwin L."/>
            <person name="Han C."/>
            <person name="Tapia R."/>
            <person name="Detter J.C."/>
            <person name="Schmutz J."/>
            <person name="Brettin T."/>
            <person name="Larimer F."/>
            <person name="Land M."/>
            <person name="Hauser L."/>
            <person name="Kyrpides N.C."/>
            <person name="Ivanova N."/>
            <person name="Goker M."/>
            <person name="Woyke T."/>
            <person name="Wu Q.L."/>
            <person name="Pockl M."/>
            <person name="Hahn M.W."/>
            <person name="Klenk H.P."/>
        </authorList>
    </citation>
    <scope>NUCLEOTIDE SEQUENCE [LARGE SCALE GENOMIC DNA]</scope>
    <source>
        <strain>DSM 18221 / CIP 109841 / QLW-P1DMWA-1</strain>
    </source>
</reference>
<accession>A4SYE2</accession>
<comment type="function">
    <text evidence="1">Specifically methylates position 2 of adenine 2503 in 23S rRNA and position 2 of adenine 37 in tRNAs. m2A2503 modification seems to play a crucial role in the proofreading step occurring at the peptidyl transferase center and thus would serve to optimize ribosomal fidelity.</text>
</comment>
<comment type="catalytic activity">
    <reaction evidence="1">
        <text>adenosine(2503) in 23S rRNA + 2 reduced [2Fe-2S]-[ferredoxin] + 2 S-adenosyl-L-methionine = 2-methyladenosine(2503) in 23S rRNA + 5'-deoxyadenosine + L-methionine + 2 oxidized [2Fe-2S]-[ferredoxin] + S-adenosyl-L-homocysteine</text>
        <dbReference type="Rhea" id="RHEA:42916"/>
        <dbReference type="Rhea" id="RHEA-COMP:10000"/>
        <dbReference type="Rhea" id="RHEA-COMP:10001"/>
        <dbReference type="Rhea" id="RHEA-COMP:10152"/>
        <dbReference type="Rhea" id="RHEA-COMP:10282"/>
        <dbReference type="ChEBI" id="CHEBI:17319"/>
        <dbReference type="ChEBI" id="CHEBI:33737"/>
        <dbReference type="ChEBI" id="CHEBI:33738"/>
        <dbReference type="ChEBI" id="CHEBI:57844"/>
        <dbReference type="ChEBI" id="CHEBI:57856"/>
        <dbReference type="ChEBI" id="CHEBI:59789"/>
        <dbReference type="ChEBI" id="CHEBI:74411"/>
        <dbReference type="ChEBI" id="CHEBI:74497"/>
        <dbReference type="EC" id="2.1.1.192"/>
    </reaction>
</comment>
<comment type="catalytic activity">
    <reaction evidence="1">
        <text>adenosine(37) in tRNA + 2 reduced [2Fe-2S]-[ferredoxin] + 2 S-adenosyl-L-methionine = 2-methyladenosine(37) in tRNA + 5'-deoxyadenosine + L-methionine + 2 oxidized [2Fe-2S]-[ferredoxin] + S-adenosyl-L-homocysteine</text>
        <dbReference type="Rhea" id="RHEA:43332"/>
        <dbReference type="Rhea" id="RHEA-COMP:10000"/>
        <dbReference type="Rhea" id="RHEA-COMP:10001"/>
        <dbReference type="Rhea" id="RHEA-COMP:10162"/>
        <dbReference type="Rhea" id="RHEA-COMP:10485"/>
        <dbReference type="ChEBI" id="CHEBI:17319"/>
        <dbReference type="ChEBI" id="CHEBI:33737"/>
        <dbReference type="ChEBI" id="CHEBI:33738"/>
        <dbReference type="ChEBI" id="CHEBI:57844"/>
        <dbReference type="ChEBI" id="CHEBI:57856"/>
        <dbReference type="ChEBI" id="CHEBI:59789"/>
        <dbReference type="ChEBI" id="CHEBI:74411"/>
        <dbReference type="ChEBI" id="CHEBI:74497"/>
        <dbReference type="EC" id="2.1.1.192"/>
    </reaction>
</comment>
<comment type="cofactor">
    <cofactor evidence="1">
        <name>[4Fe-4S] cluster</name>
        <dbReference type="ChEBI" id="CHEBI:49883"/>
    </cofactor>
    <text evidence="1">Binds 1 [4Fe-4S] cluster. The cluster is coordinated with 3 cysteines and an exchangeable S-adenosyl-L-methionine.</text>
</comment>
<comment type="subcellular location">
    <subcellularLocation>
        <location evidence="1">Cytoplasm</location>
    </subcellularLocation>
</comment>
<comment type="miscellaneous">
    <text evidence="1">Reaction proceeds by a ping-pong mechanism involving intermediate methylation of a conserved cysteine residue.</text>
</comment>
<comment type="similarity">
    <text evidence="1">Belongs to the radical SAM superfamily. RlmN family.</text>
</comment>